<gene>
    <name evidence="1" type="primary">fabH</name>
    <name type="ordered locus">YpsIP31758_1576</name>
</gene>
<evidence type="ECO:0000255" key="1">
    <source>
        <dbReference type="HAMAP-Rule" id="MF_01815"/>
    </source>
</evidence>
<sequence>MYTKILGTGSYLPVQVRSNADLEKMVDTSDEWIVTRTGIRERRIAGLDETVATMGFQAAEKALEMAGIDKDDIGLIIVATTSSSHAFPSSACQVQRMLGIKDAASFDLAAACAGFTYALSVADQYVKSGAVKHAIVIGSDVLSRALDPEDRGTIILFGDGAGAVVLGASEQPGIMSTHLHADGRYGELLALPYPDRQQDQPAYVTMAGNEVFKVAVTELAHIVDETLQANNLDRTALDWLVPHQANLRIISATAKKLGMGMDKVVITLDRHGNTSAASVPSAFDEAVRDGRIQRGQLVLLEAFGGGFTWGSALVRF</sequence>
<accession>A7FH25</accession>
<dbReference type="EC" id="2.3.1.180" evidence="1"/>
<dbReference type="EMBL" id="CP000720">
    <property type="protein sequence ID" value="ABS48243.1"/>
    <property type="molecule type" value="Genomic_DNA"/>
</dbReference>
<dbReference type="RefSeq" id="WP_002210933.1">
    <property type="nucleotide sequence ID" value="NC_009708.1"/>
</dbReference>
<dbReference type="SMR" id="A7FH25"/>
<dbReference type="KEGG" id="ypi:YpsIP31758_1576"/>
<dbReference type="HOGENOM" id="CLU_039592_3_1_6"/>
<dbReference type="UniPathway" id="UPA00094"/>
<dbReference type="Proteomes" id="UP000002412">
    <property type="component" value="Chromosome"/>
</dbReference>
<dbReference type="GO" id="GO:0005737">
    <property type="term" value="C:cytoplasm"/>
    <property type="evidence" value="ECO:0007669"/>
    <property type="project" value="UniProtKB-SubCell"/>
</dbReference>
<dbReference type="GO" id="GO:0004315">
    <property type="term" value="F:3-oxoacyl-[acyl-carrier-protein] synthase activity"/>
    <property type="evidence" value="ECO:0007669"/>
    <property type="project" value="InterPro"/>
</dbReference>
<dbReference type="GO" id="GO:0033818">
    <property type="term" value="F:beta-ketoacyl-acyl-carrier-protein synthase III activity"/>
    <property type="evidence" value="ECO:0007669"/>
    <property type="project" value="UniProtKB-UniRule"/>
</dbReference>
<dbReference type="GO" id="GO:0006633">
    <property type="term" value="P:fatty acid biosynthetic process"/>
    <property type="evidence" value="ECO:0007669"/>
    <property type="project" value="UniProtKB-UniRule"/>
</dbReference>
<dbReference type="CDD" id="cd00830">
    <property type="entry name" value="KAS_III"/>
    <property type="match status" value="1"/>
</dbReference>
<dbReference type="FunFam" id="3.40.47.10:FF:000004">
    <property type="entry name" value="3-oxoacyl-[acyl-carrier-protein] synthase 3"/>
    <property type="match status" value="1"/>
</dbReference>
<dbReference type="Gene3D" id="3.40.47.10">
    <property type="match status" value="1"/>
</dbReference>
<dbReference type="HAMAP" id="MF_01815">
    <property type="entry name" value="FabH"/>
    <property type="match status" value="1"/>
</dbReference>
<dbReference type="InterPro" id="IPR013747">
    <property type="entry name" value="ACP_syn_III_C"/>
</dbReference>
<dbReference type="InterPro" id="IPR013751">
    <property type="entry name" value="ACP_syn_III_N"/>
</dbReference>
<dbReference type="InterPro" id="IPR004655">
    <property type="entry name" value="FabH"/>
</dbReference>
<dbReference type="InterPro" id="IPR016039">
    <property type="entry name" value="Thiolase-like"/>
</dbReference>
<dbReference type="NCBIfam" id="TIGR00747">
    <property type="entry name" value="fabH"/>
    <property type="match status" value="1"/>
</dbReference>
<dbReference type="NCBIfam" id="NF006829">
    <property type="entry name" value="PRK09352.1"/>
    <property type="match status" value="1"/>
</dbReference>
<dbReference type="PANTHER" id="PTHR43091">
    <property type="entry name" value="3-OXOACYL-[ACYL-CARRIER-PROTEIN] SYNTHASE"/>
    <property type="match status" value="1"/>
</dbReference>
<dbReference type="PANTHER" id="PTHR43091:SF1">
    <property type="entry name" value="BETA-KETOACYL-[ACYL-CARRIER-PROTEIN] SYNTHASE III, CHLOROPLASTIC"/>
    <property type="match status" value="1"/>
</dbReference>
<dbReference type="Pfam" id="PF08545">
    <property type="entry name" value="ACP_syn_III"/>
    <property type="match status" value="1"/>
</dbReference>
<dbReference type="Pfam" id="PF08541">
    <property type="entry name" value="ACP_syn_III_C"/>
    <property type="match status" value="1"/>
</dbReference>
<dbReference type="SUPFAM" id="SSF53901">
    <property type="entry name" value="Thiolase-like"/>
    <property type="match status" value="1"/>
</dbReference>
<proteinExistence type="inferred from homology"/>
<keyword id="KW-0012">Acyltransferase</keyword>
<keyword id="KW-0963">Cytoplasm</keyword>
<keyword id="KW-0275">Fatty acid biosynthesis</keyword>
<keyword id="KW-0276">Fatty acid metabolism</keyword>
<keyword id="KW-0444">Lipid biosynthesis</keyword>
<keyword id="KW-0443">Lipid metabolism</keyword>
<keyword id="KW-0511">Multifunctional enzyme</keyword>
<keyword id="KW-0808">Transferase</keyword>
<name>FABH_YERP3</name>
<protein>
    <recommendedName>
        <fullName evidence="1">Beta-ketoacyl-[acyl-carrier-protein] synthase III</fullName>
        <shortName evidence="1">Beta-ketoacyl-ACP synthase III</shortName>
        <shortName evidence="1">KAS III</shortName>
        <ecNumber evidence="1">2.3.1.180</ecNumber>
    </recommendedName>
    <alternativeName>
        <fullName evidence="1">3-oxoacyl-[acyl-carrier-protein] synthase 3</fullName>
    </alternativeName>
    <alternativeName>
        <fullName evidence="1">3-oxoacyl-[acyl-carrier-protein] synthase III</fullName>
    </alternativeName>
</protein>
<feature type="chain" id="PRO_1000070246" description="Beta-ketoacyl-[acyl-carrier-protein] synthase III">
    <location>
        <begin position="1"/>
        <end position="316"/>
    </location>
</feature>
<feature type="region of interest" description="ACP-binding" evidence="1">
    <location>
        <begin position="244"/>
        <end position="248"/>
    </location>
</feature>
<feature type="active site" evidence="1">
    <location>
        <position position="112"/>
    </location>
</feature>
<feature type="active site" evidence="1">
    <location>
        <position position="243"/>
    </location>
</feature>
<feature type="active site" evidence="1">
    <location>
        <position position="273"/>
    </location>
</feature>
<reference key="1">
    <citation type="journal article" date="2007" name="PLoS Genet.">
        <title>The complete genome sequence of Yersinia pseudotuberculosis IP31758, the causative agent of Far East scarlet-like fever.</title>
        <authorList>
            <person name="Eppinger M."/>
            <person name="Rosovitz M.J."/>
            <person name="Fricke W.F."/>
            <person name="Rasko D.A."/>
            <person name="Kokorina G."/>
            <person name="Fayolle C."/>
            <person name="Lindler L.E."/>
            <person name="Carniel E."/>
            <person name="Ravel J."/>
        </authorList>
    </citation>
    <scope>NUCLEOTIDE SEQUENCE [LARGE SCALE GENOMIC DNA]</scope>
    <source>
        <strain>IP 31758</strain>
    </source>
</reference>
<organism>
    <name type="scientific">Yersinia pseudotuberculosis serotype O:1b (strain IP 31758)</name>
    <dbReference type="NCBI Taxonomy" id="349747"/>
    <lineage>
        <taxon>Bacteria</taxon>
        <taxon>Pseudomonadati</taxon>
        <taxon>Pseudomonadota</taxon>
        <taxon>Gammaproteobacteria</taxon>
        <taxon>Enterobacterales</taxon>
        <taxon>Yersiniaceae</taxon>
        <taxon>Yersinia</taxon>
    </lineage>
</organism>
<comment type="function">
    <text evidence="1">Catalyzes the condensation reaction of fatty acid synthesis by the addition to an acyl acceptor of two carbons from malonyl-ACP. Catalyzes the first condensation reaction which initiates fatty acid synthesis and may therefore play a role in governing the total rate of fatty acid production. Possesses both acetoacetyl-ACP synthase and acetyl transacylase activities. Its substrate specificity determines the biosynthesis of branched-chain and/or straight-chain of fatty acids.</text>
</comment>
<comment type="catalytic activity">
    <reaction evidence="1">
        <text>malonyl-[ACP] + acetyl-CoA + H(+) = 3-oxobutanoyl-[ACP] + CO2 + CoA</text>
        <dbReference type="Rhea" id="RHEA:12080"/>
        <dbReference type="Rhea" id="RHEA-COMP:9623"/>
        <dbReference type="Rhea" id="RHEA-COMP:9625"/>
        <dbReference type="ChEBI" id="CHEBI:15378"/>
        <dbReference type="ChEBI" id="CHEBI:16526"/>
        <dbReference type="ChEBI" id="CHEBI:57287"/>
        <dbReference type="ChEBI" id="CHEBI:57288"/>
        <dbReference type="ChEBI" id="CHEBI:78449"/>
        <dbReference type="ChEBI" id="CHEBI:78450"/>
        <dbReference type="EC" id="2.3.1.180"/>
    </reaction>
</comment>
<comment type="pathway">
    <text evidence="1">Lipid metabolism; fatty acid biosynthesis.</text>
</comment>
<comment type="subunit">
    <text evidence="1">Homodimer.</text>
</comment>
<comment type="subcellular location">
    <subcellularLocation>
        <location evidence="1">Cytoplasm</location>
    </subcellularLocation>
</comment>
<comment type="domain">
    <text evidence="1">The last Arg residue of the ACP-binding site is essential for the weak association between ACP/AcpP and FabH.</text>
</comment>
<comment type="similarity">
    <text evidence="1">Belongs to the thiolase-like superfamily. FabH family.</text>
</comment>